<comment type="function">
    <text evidence="1">This protein is involved in the repair of mismatches in DNA. It is possible that it carries out the mismatch recognition step. This protein has a weak ATPase activity.</text>
</comment>
<comment type="similarity">
    <text evidence="1">Belongs to the DNA mismatch repair MutS family.</text>
</comment>
<sequence length="861" mass="96089">MNPIDTDDLEKHTPMMRQYLTMKAEHHDMLLFYRMGDFYELFYDDAKRASELLGISLTARGKSGGDPIPMAGIPYHAVEGYLAKLVQIGQSVAICEQIGDPATSKGPVERKVVRIVTPGTLTDEALLQERQDNLLAAVYQGKVGFGYATLDVSSGRFVIAELETKESLEAELQRTNPVEILYSEDFGAMELLHHFKGKRRRPEWEFDYDTSIKLLLAQFGTKDLHGFGITDARLSLQAAGCLMQYVKDTQRTALPHINAITRFNQTDTIVLDAATRRNLELTQNLSGGRDNTLAAVLDNTATAMGSRMLQRWIHQPLRDHAQIFARQTAVNELLETTAHESLHEQLKALGDIERIMARLALRTARPRDFARLRQALNLLPKLQQSLAQLSAPHTVKLGQLLGEFPEEQQLLERAIVDNPPMLIRDGGVIREGYNAELDEWRGLSEGATDYLVQLEAREKERTGIATLKVGYNRVHGYYIEVSRLQSQQVPLNYQRRQTLKNMERYITPELKEYEEKVLSSQGKALALEKQLWDELFDLILPKLHELQAFARAAAELDVLSNFAERAETLGYTCPELSSEIGVKIEAGRHPVVERVSQTPFIANPVTLYNQRRMLIVTGPNMGGKSTYMRQVALITLMAHIGCFVPADRAIIGPIDRIFTRIGASDDLASGRSTFMVEMTETANILHNATAQSLVLMDEIGRGTSTYDGLSLAWSAAEYLAQQVGAMTLFATHYFELTQLPELMAGVYNVHLDAIEHEDTIAFMHAVQEGAASKSYGLQVAALAGVPARVIKAAKHKLHQLESRDHQVEGVNVNGTRAPIQTLLALPEPVENPAVSKLKAINPDNLTPKQALDLLYELKRLS</sequence>
<accession>Q0HL63</accession>
<reference key="1">
    <citation type="submission" date="2006-08" db="EMBL/GenBank/DDBJ databases">
        <title>Complete sequence of Shewanella sp. MR-4.</title>
        <authorList>
            <consortium name="US DOE Joint Genome Institute"/>
            <person name="Copeland A."/>
            <person name="Lucas S."/>
            <person name="Lapidus A."/>
            <person name="Barry K."/>
            <person name="Detter J.C."/>
            <person name="Glavina del Rio T."/>
            <person name="Hammon N."/>
            <person name="Israni S."/>
            <person name="Dalin E."/>
            <person name="Tice H."/>
            <person name="Pitluck S."/>
            <person name="Kiss H."/>
            <person name="Brettin T."/>
            <person name="Bruce D."/>
            <person name="Han C."/>
            <person name="Tapia R."/>
            <person name="Gilna P."/>
            <person name="Schmutz J."/>
            <person name="Larimer F."/>
            <person name="Land M."/>
            <person name="Hauser L."/>
            <person name="Kyrpides N."/>
            <person name="Mikhailova N."/>
            <person name="Nealson K."/>
            <person name="Konstantinidis K."/>
            <person name="Klappenbach J."/>
            <person name="Tiedje J."/>
            <person name="Richardson P."/>
        </authorList>
    </citation>
    <scope>NUCLEOTIDE SEQUENCE [LARGE SCALE GENOMIC DNA]</scope>
    <source>
        <strain>MR-4</strain>
    </source>
</reference>
<organism>
    <name type="scientific">Shewanella sp. (strain MR-4)</name>
    <dbReference type="NCBI Taxonomy" id="60480"/>
    <lineage>
        <taxon>Bacteria</taxon>
        <taxon>Pseudomonadati</taxon>
        <taxon>Pseudomonadota</taxon>
        <taxon>Gammaproteobacteria</taxon>
        <taxon>Alteromonadales</taxon>
        <taxon>Shewanellaceae</taxon>
        <taxon>Shewanella</taxon>
    </lineage>
</organism>
<proteinExistence type="inferred from homology"/>
<protein>
    <recommendedName>
        <fullName evidence="1">DNA mismatch repair protein MutS</fullName>
    </recommendedName>
</protein>
<feature type="chain" id="PRO_1000008098" description="DNA mismatch repair protein MutS">
    <location>
        <begin position="1"/>
        <end position="861"/>
    </location>
</feature>
<feature type="binding site" evidence="1">
    <location>
        <begin position="618"/>
        <end position="625"/>
    </location>
    <ligand>
        <name>ATP</name>
        <dbReference type="ChEBI" id="CHEBI:30616"/>
    </ligand>
</feature>
<name>MUTS_SHESM</name>
<gene>
    <name evidence="1" type="primary">mutS</name>
    <name type="ordered locus">Shewmr4_1124</name>
</gene>
<evidence type="ECO:0000255" key="1">
    <source>
        <dbReference type="HAMAP-Rule" id="MF_00096"/>
    </source>
</evidence>
<dbReference type="EMBL" id="CP000446">
    <property type="protein sequence ID" value="ABI38204.1"/>
    <property type="molecule type" value="Genomic_DNA"/>
</dbReference>
<dbReference type="RefSeq" id="WP_011621913.1">
    <property type="nucleotide sequence ID" value="NC_008321.1"/>
</dbReference>
<dbReference type="SMR" id="Q0HL63"/>
<dbReference type="KEGG" id="she:Shewmr4_1124"/>
<dbReference type="HOGENOM" id="CLU_002472_4_0_6"/>
<dbReference type="GO" id="GO:0005829">
    <property type="term" value="C:cytosol"/>
    <property type="evidence" value="ECO:0007669"/>
    <property type="project" value="TreeGrafter"/>
</dbReference>
<dbReference type="GO" id="GO:0005524">
    <property type="term" value="F:ATP binding"/>
    <property type="evidence" value="ECO:0007669"/>
    <property type="project" value="UniProtKB-UniRule"/>
</dbReference>
<dbReference type="GO" id="GO:0140664">
    <property type="term" value="F:ATP-dependent DNA damage sensor activity"/>
    <property type="evidence" value="ECO:0007669"/>
    <property type="project" value="InterPro"/>
</dbReference>
<dbReference type="GO" id="GO:0003684">
    <property type="term" value="F:damaged DNA binding"/>
    <property type="evidence" value="ECO:0007669"/>
    <property type="project" value="UniProtKB-UniRule"/>
</dbReference>
<dbReference type="GO" id="GO:0030983">
    <property type="term" value="F:mismatched DNA binding"/>
    <property type="evidence" value="ECO:0007669"/>
    <property type="project" value="InterPro"/>
</dbReference>
<dbReference type="GO" id="GO:0006298">
    <property type="term" value="P:mismatch repair"/>
    <property type="evidence" value="ECO:0007669"/>
    <property type="project" value="UniProtKB-UniRule"/>
</dbReference>
<dbReference type="CDD" id="cd03284">
    <property type="entry name" value="ABC_MutS1"/>
    <property type="match status" value="1"/>
</dbReference>
<dbReference type="FunFam" id="1.10.1420.10:FF:000002">
    <property type="entry name" value="DNA mismatch repair protein MutS"/>
    <property type="match status" value="1"/>
</dbReference>
<dbReference type="FunFam" id="3.30.420.110:FF:000001">
    <property type="entry name" value="DNA mismatch repair protein MutS"/>
    <property type="match status" value="1"/>
</dbReference>
<dbReference type="FunFam" id="3.40.1170.10:FF:000001">
    <property type="entry name" value="DNA mismatch repair protein MutS"/>
    <property type="match status" value="1"/>
</dbReference>
<dbReference type="FunFam" id="3.40.50.300:FF:000283">
    <property type="entry name" value="DNA mismatch repair protein MutS"/>
    <property type="match status" value="1"/>
</dbReference>
<dbReference type="Gene3D" id="1.10.1420.10">
    <property type="match status" value="2"/>
</dbReference>
<dbReference type="Gene3D" id="6.10.140.430">
    <property type="match status" value="1"/>
</dbReference>
<dbReference type="Gene3D" id="3.40.1170.10">
    <property type="entry name" value="DNA repair protein MutS, domain I"/>
    <property type="match status" value="1"/>
</dbReference>
<dbReference type="Gene3D" id="3.30.420.110">
    <property type="entry name" value="MutS, connector domain"/>
    <property type="match status" value="1"/>
</dbReference>
<dbReference type="Gene3D" id="3.40.50.300">
    <property type="entry name" value="P-loop containing nucleotide triphosphate hydrolases"/>
    <property type="match status" value="1"/>
</dbReference>
<dbReference type="HAMAP" id="MF_00096">
    <property type="entry name" value="MutS"/>
    <property type="match status" value="1"/>
</dbReference>
<dbReference type="InterPro" id="IPR005748">
    <property type="entry name" value="DNA_mismatch_repair_MutS"/>
</dbReference>
<dbReference type="InterPro" id="IPR007695">
    <property type="entry name" value="DNA_mismatch_repair_MutS-lik_N"/>
</dbReference>
<dbReference type="InterPro" id="IPR017261">
    <property type="entry name" value="DNA_mismatch_repair_MutS/MSH"/>
</dbReference>
<dbReference type="InterPro" id="IPR000432">
    <property type="entry name" value="DNA_mismatch_repair_MutS_C"/>
</dbReference>
<dbReference type="InterPro" id="IPR007861">
    <property type="entry name" value="DNA_mismatch_repair_MutS_clamp"/>
</dbReference>
<dbReference type="InterPro" id="IPR007696">
    <property type="entry name" value="DNA_mismatch_repair_MutS_core"/>
</dbReference>
<dbReference type="InterPro" id="IPR016151">
    <property type="entry name" value="DNA_mismatch_repair_MutS_N"/>
</dbReference>
<dbReference type="InterPro" id="IPR036187">
    <property type="entry name" value="DNA_mismatch_repair_MutS_sf"/>
</dbReference>
<dbReference type="InterPro" id="IPR007860">
    <property type="entry name" value="DNA_mmatch_repair_MutS_con_dom"/>
</dbReference>
<dbReference type="InterPro" id="IPR045076">
    <property type="entry name" value="MutS"/>
</dbReference>
<dbReference type="InterPro" id="IPR036678">
    <property type="entry name" value="MutS_con_dom_sf"/>
</dbReference>
<dbReference type="InterPro" id="IPR027417">
    <property type="entry name" value="P-loop_NTPase"/>
</dbReference>
<dbReference type="NCBIfam" id="TIGR01070">
    <property type="entry name" value="mutS1"/>
    <property type="match status" value="1"/>
</dbReference>
<dbReference type="NCBIfam" id="NF003810">
    <property type="entry name" value="PRK05399.1"/>
    <property type="match status" value="1"/>
</dbReference>
<dbReference type="PANTHER" id="PTHR11361:SF34">
    <property type="entry name" value="DNA MISMATCH REPAIR PROTEIN MSH1, MITOCHONDRIAL"/>
    <property type="match status" value="1"/>
</dbReference>
<dbReference type="PANTHER" id="PTHR11361">
    <property type="entry name" value="DNA MISMATCH REPAIR PROTEIN MUTS FAMILY MEMBER"/>
    <property type="match status" value="1"/>
</dbReference>
<dbReference type="Pfam" id="PF01624">
    <property type="entry name" value="MutS_I"/>
    <property type="match status" value="1"/>
</dbReference>
<dbReference type="Pfam" id="PF05188">
    <property type="entry name" value="MutS_II"/>
    <property type="match status" value="1"/>
</dbReference>
<dbReference type="Pfam" id="PF05192">
    <property type="entry name" value="MutS_III"/>
    <property type="match status" value="1"/>
</dbReference>
<dbReference type="Pfam" id="PF05190">
    <property type="entry name" value="MutS_IV"/>
    <property type="match status" value="1"/>
</dbReference>
<dbReference type="Pfam" id="PF00488">
    <property type="entry name" value="MutS_V"/>
    <property type="match status" value="1"/>
</dbReference>
<dbReference type="PIRSF" id="PIRSF037677">
    <property type="entry name" value="DNA_mis_repair_Msh6"/>
    <property type="match status" value="1"/>
</dbReference>
<dbReference type="SMART" id="SM00534">
    <property type="entry name" value="MUTSac"/>
    <property type="match status" value="1"/>
</dbReference>
<dbReference type="SMART" id="SM00533">
    <property type="entry name" value="MUTSd"/>
    <property type="match status" value="1"/>
</dbReference>
<dbReference type="SUPFAM" id="SSF55271">
    <property type="entry name" value="DNA repair protein MutS, domain I"/>
    <property type="match status" value="1"/>
</dbReference>
<dbReference type="SUPFAM" id="SSF53150">
    <property type="entry name" value="DNA repair protein MutS, domain II"/>
    <property type="match status" value="1"/>
</dbReference>
<dbReference type="SUPFAM" id="SSF48334">
    <property type="entry name" value="DNA repair protein MutS, domain III"/>
    <property type="match status" value="1"/>
</dbReference>
<dbReference type="SUPFAM" id="SSF52540">
    <property type="entry name" value="P-loop containing nucleoside triphosphate hydrolases"/>
    <property type="match status" value="1"/>
</dbReference>
<dbReference type="PROSITE" id="PS00486">
    <property type="entry name" value="DNA_MISMATCH_REPAIR_2"/>
    <property type="match status" value="1"/>
</dbReference>
<keyword id="KW-0067">ATP-binding</keyword>
<keyword id="KW-0227">DNA damage</keyword>
<keyword id="KW-0234">DNA repair</keyword>
<keyword id="KW-0238">DNA-binding</keyword>
<keyword id="KW-0547">Nucleotide-binding</keyword>